<sequence length="192" mass="20362">TDGHQAAAPQVGDPQAGEAKANGVCLACHGPQGNSLVPIWPKLAGQHPEYIVKQLMDFKQRRANEQMTPMAMPLTDQEVLDLAAYYATQPKTPGAADPELASKGESLYRWGNPETGVPACSGCHGPAGGAGQSLAKFPRLSAQHADYTKQTLEHFRGALRANDPNGMMRGAAARLSDQEIAAVSQYLQGLSQ</sequence>
<keyword id="KW-0903">Direct protein sequencing</keyword>
<keyword id="KW-0249">Electron transport</keyword>
<keyword id="KW-0349">Heme</keyword>
<keyword id="KW-0408">Iron</keyword>
<keyword id="KW-0479">Metal-binding</keyword>
<keyword id="KW-0574">Periplasm</keyword>
<keyword id="KW-0677">Repeat</keyword>
<keyword id="KW-0813">Transport</keyword>
<proteinExistence type="evidence at protein level"/>
<accession>P86052</accession>
<evidence type="ECO:0000250" key="1">
    <source>
        <dbReference type="UniProtKB" id="Q52369"/>
    </source>
</evidence>
<evidence type="ECO:0000255" key="2">
    <source>
        <dbReference type="PROSITE-ProRule" id="PRU00433"/>
    </source>
</evidence>
<evidence type="ECO:0000269" key="3">
    <source>
    </source>
</evidence>
<evidence type="ECO:0000269" key="4">
    <source>
    </source>
</evidence>
<evidence type="ECO:0000303" key="5">
    <source>
    </source>
</evidence>
<evidence type="ECO:0000303" key="6">
    <source>
    </source>
</evidence>
<evidence type="ECO:0000305" key="7"/>
<protein>
    <recommendedName>
        <fullName evidence="5 6">Cytochrome c4</fullName>
    </recommendedName>
</protein>
<comment type="function">
    <text evidence="3">Diheme, high potential cytochrome c believed to be an intermediate electron donor in an anaerobic electron transport chain.</text>
</comment>
<comment type="biophysicochemical properties">
    <absorption>
        <max evidence="3">417 nm</max>
        <text>The absorbance maximum is for the reduced state. The oxidized cytochrome exhibits a weak maximum at 695 nm.</text>
    </absorption>
</comment>
<comment type="subcellular location">
    <subcellularLocation>
        <location evidence="3">Periplasm</location>
    </subcellularLocation>
</comment>
<comment type="PTM">
    <text evidence="4">Binds 2 heme c groups covalently per subunit.</text>
</comment>
<comment type="mass spectrometry" mass="20749.0" method="Electrospray" evidence="4">
    <text>The measured mass is that of the peptide with a mercury ion coordinated to each heme binding motif.</text>
</comment>
<feature type="chain" id="PRO_0000355076" description="Cytochrome c4">
    <location>
        <begin position="1"/>
        <end position="192"/>
    </location>
</feature>
<feature type="domain" description="Cytochrome c 1" evidence="2">
    <location>
        <begin position="12"/>
        <end position="90"/>
    </location>
</feature>
<feature type="domain" description="Cytochrome c 2" evidence="2">
    <location>
        <begin position="99"/>
        <end position="191"/>
    </location>
</feature>
<feature type="binding site" description="covalent" evidence="1 2">
    <location>
        <position position="25"/>
    </location>
    <ligand>
        <name>heme c</name>
        <dbReference type="ChEBI" id="CHEBI:61717"/>
        <label>1</label>
    </ligand>
</feature>
<feature type="binding site" description="covalent" evidence="1 2">
    <location>
        <position position="28"/>
    </location>
    <ligand>
        <name>heme c</name>
        <dbReference type="ChEBI" id="CHEBI:61717"/>
        <label>1</label>
    </ligand>
</feature>
<feature type="binding site" description="axial binding residue" evidence="1 2">
    <location>
        <position position="29"/>
    </location>
    <ligand>
        <name>heme c</name>
        <dbReference type="ChEBI" id="CHEBI:61717"/>
        <label>1</label>
    </ligand>
    <ligandPart>
        <name>Fe</name>
        <dbReference type="ChEBI" id="CHEBI:18248"/>
    </ligandPart>
</feature>
<feature type="binding site" description="covalent" evidence="1 2">
    <location>
        <position position="120"/>
    </location>
    <ligand>
        <name>heme c</name>
        <dbReference type="ChEBI" id="CHEBI:61717"/>
        <label>2</label>
    </ligand>
</feature>
<feature type="binding site" description="covalent" evidence="1 2">
    <location>
        <position position="123"/>
    </location>
    <ligand>
        <name>heme c</name>
        <dbReference type="ChEBI" id="CHEBI:61717"/>
        <label>2</label>
    </ligand>
</feature>
<feature type="binding site" description="axial binding residue" evidence="1 2">
    <location>
        <position position="124"/>
    </location>
    <ligand>
        <name>heme c</name>
        <dbReference type="ChEBI" id="CHEBI:61717"/>
        <label>2</label>
    </ligand>
    <ligandPart>
        <name>Fe</name>
        <dbReference type="ChEBI" id="CHEBI:18248"/>
    </ligandPart>
</feature>
<organism>
    <name type="scientific">Thiocapsa roseopersicina</name>
    <dbReference type="NCBI Taxonomy" id="1058"/>
    <lineage>
        <taxon>Bacteria</taxon>
        <taxon>Pseudomonadati</taxon>
        <taxon>Pseudomonadota</taxon>
        <taxon>Gammaproteobacteria</taxon>
        <taxon>Chromatiales</taxon>
        <taxon>Chromatiaceae</taxon>
        <taxon>Thiocapsa</taxon>
    </lineage>
</organism>
<dbReference type="SMR" id="P86052"/>
<dbReference type="STRING" id="1058.SAMN05421783_105115"/>
<dbReference type="GO" id="GO:0042597">
    <property type="term" value="C:periplasmic space"/>
    <property type="evidence" value="ECO:0000314"/>
    <property type="project" value="UniProtKB"/>
</dbReference>
<dbReference type="GO" id="GO:0009055">
    <property type="term" value="F:electron transfer activity"/>
    <property type="evidence" value="ECO:0000314"/>
    <property type="project" value="UniProtKB"/>
</dbReference>
<dbReference type="GO" id="GO:0020037">
    <property type="term" value="F:heme binding"/>
    <property type="evidence" value="ECO:0000314"/>
    <property type="project" value="UniProtKB"/>
</dbReference>
<dbReference type="GO" id="GO:0005506">
    <property type="term" value="F:iron ion binding"/>
    <property type="evidence" value="ECO:0000314"/>
    <property type="project" value="UniProtKB"/>
</dbReference>
<dbReference type="GO" id="GO:0022900">
    <property type="term" value="P:electron transport chain"/>
    <property type="evidence" value="ECO:0000314"/>
    <property type="project" value="UniProtKB"/>
</dbReference>
<dbReference type="GO" id="GO:0015886">
    <property type="term" value="P:heme transport"/>
    <property type="evidence" value="ECO:0000314"/>
    <property type="project" value="UniProtKB"/>
</dbReference>
<dbReference type="Gene3D" id="1.10.760.10">
    <property type="entry name" value="Cytochrome c-like domain"/>
    <property type="match status" value="2"/>
</dbReference>
<dbReference type="InterPro" id="IPR009056">
    <property type="entry name" value="Cyt_c-like_dom"/>
</dbReference>
<dbReference type="InterPro" id="IPR036909">
    <property type="entry name" value="Cyt_c-like_dom_sf"/>
</dbReference>
<dbReference type="InterPro" id="IPR008168">
    <property type="entry name" value="Cyt_C_IC"/>
</dbReference>
<dbReference type="InterPro" id="IPR024167">
    <property type="entry name" value="Cytochrome_c4-like"/>
</dbReference>
<dbReference type="InterPro" id="IPR050597">
    <property type="entry name" value="Cytochrome_c_Oxidase_Subunit"/>
</dbReference>
<dbReference type="PANTHER" id="PTHR33751">
    <property type="entry name" value="CBB3-TYPE CYTOCHROME C OXIDASE SUBUNIT FIXP"/>
    <property type="match status" value="1"/>
</dbReference>
<dbReference type="PANTHER" id="PTHR33751:SF9">
    <property type="entry name" value="CYTOCHROME C4"/>
    <property type="match status" value="1"/>
</dbReference>
<dbReference type="Pfam" id="PF00034">
    <property type="entry name" value="Cytochrom_C"/>
    <property type="match status" value="2"/>
</dbReference>
<dbReference type="PIRSF" id="PIRSF000005">
    <property type="entry name" value="Cytochrome_c4"/>
    <property type="match status" value="1"/>
</dbReference>
<dbReference type="PRINTS" id="PR00605">
    <property type="entry name" value="CYTCHROMECIC"/>
</dbReference>
<dbReference type="SUPFAM" id="SSF46626">
    <property type="entry name" value="Cytochrome c"/>
    <property type="match status" value="2"/>
</dbReference>
<dbReference type="PROSITE" id="PS51007">
    <property type="entry name" value="CYTC"/>
    <property type="match status" value="2"/>
</dbReference>
<reference evidence="7" key="1">
    <citation type="journal article" date="2007" name="J. Mass Spectrom.">
        <title>De novo sequencing of a 21-kDa cytochrome c4 from Thiocapsa roseopersicina by nanoelectrospray ionization ion-trap and Fourier-transform ion-cyclotron resonance mass spectrometry.</title>
        <authorList>
            <person name="Branca R.M.M."/>
            <person name="Bodo G."/>
            <person name="Bagyinka C."/>
            <person name="Prokai L."/>
        </authorList>
    </citation>
    <scope>PROTEIN SEQUENCE</scope>
    <scope>MASS SPECTROMETRY</scope>
    <scope>HEME-BINDING</scope>
</reference>
<reference evidence="7" key="2">
    <citation type="journal article" date="2007" name="Arch. Biochem. Biophys.">
        <title>Oxygen and temperature-dependent structural and redox changes in a novel cytochrome c(4) from the purple sulfur photosynthetic bacterium Thiocapsa roseopersicina.</title>
        <authorList>
            <person name="Branca R.M.M."/>
            <person name="Bodo G."/>
            <person name="Varkonyi Z."/>
            <person name="Debreczeny M."/>
            <person name="Oesz J."/>
            <person name="Bagyinka C."/>
        </authorList>
    </citation>
    <scope>FUNCTION</scope>
    <scope>SUBCELLULAR LOCATION</scope>
    <scope>BIOPHYSICOCHEMICAL PROPERTIES</scope>
</reference>
<reference evidence="7" key="3">
    <citation type="journal article" date="2006" name="Acta Crystallogr. F">
        <title>Cross-crystallization method used for the crystallization and preliminary diffraction analysis of a novel di-haem cytochrome c4.</title>
        <authorList>
            <person name="Tomcova I."/>
            <person name="Branca R.M.M."/>
            <person name="Bodo G."/>
            <person name="Bagyinka C."/>
            <person name="Smatanova I.K."/>
        </authorList>
    </citation>
    <scope>CRYSTALLIZATION</scope>
    <scope>X-RAY CRYSTALLOGRAPHY (1.72 ANGSTROMS)</scope>
</reference>
<name>CYC4_THIRO</name>